<keyword id="KW-0175">Coiled coil</keyword>
<keyword id="KW-1017">Isopeptide bond</keyword>
<keyword id="KW-0597">Phosphoprotein</keyword>
<keyword id="KW-1267">Proteomics identification</keyword>
<keyword id="KW-1185">Reference proteome</keyword>
<keyword id="KW-0832">Ubl conjugation</keyword>
<evidence type="ECO:0000250" key="1">
    <source>
        <dbReference type="UniProtKB" id="Q501L3"/>
    </source>
</evidence>
<evidence type="ECO:0000255" key="2"/>
<evidence type="ECO:0000256" key="3">
    <source>
        <dbReference type="SAM" id="MobiDB-lite"/>
    </source>
</evidence>
<evidence type="ECO:0000305" key="4"/>
<evidence type="ECO:0007744" key="5">
    <source>
    </source>
</evidence>
<evidence type="ECO:0007744" key="6">
    <source>
    </source>
</evidence>
<evidence type="ECO:0007744" key="7">
    <source>
    </source>
</evidence>
<reference key="1">
    <citation type="journal article" date="2001" name="DNA Res.">
        <title>Prediction of the coding sequences of unidentified human genes. XX. The complete sequences of 100 new cDNA clones from brain which code for large proteins in vitro.</title>
        <authorList>
            <person name="Nagase T."/>
            <person name="Nakayama M."/>
            <person name="Nakajima D."/>
            <person name="Kikuno R."/>
            <person name="Ohara O."/>
        </authorList>
    </citation>
    <scope>NUCLEOTIDE SEQUENCE [LARGE SCALE MRNA]</scope>
    <source>
        <tissue>Brain</tissue>
    </source>
</reference>
<reference key="2">
    <citation type="journal article" date="2004" name="Nat. Genet.">
        <title>Complete sequencing and characterization of 21,243 full-length human cDNAs.</title>
        <authorList>
            <person name="Ota T."/>
            <person name="Suzuki Y."/>
            <person name="Nishikawa T."/>
            <person name="Otsuki T."/>
            <person name="Sugiyama T."/>
            <person name="Irie R."/>
            <person name="Wakamatsu A."/>
            <person name="Hayashi K."/>
            <person name="Sato H."/>
            <person name="Nagai K."/>
            <person name="Kimura K."/>
            <person name="Makita H."/>
            <person name="Sekine M."/>
            <person name="Obayashi M."/>
            <person name="Nishi T."/>
            <person name="Shibahara T."/>
            <person name="Tanaka T."/>
            <person name="Ishii S."/>
            <person name="Yamamoto J."/>
            <person name="Saito K."/>
            <person name="Kawai Y."/>
            <person name="Isono Y."/>
            <person name="Nakamura Y."/>
            <person name="Nagahari K."/>
            <person name="Murakami K."/>
            <person name="Yasuda T."/>
            <person name="Iwayanagi T."/>
            <person name="Wagatsuma M."/>
            <person name="Shiratori A."/>
            <person name="Sudo H."/>
            <person name="Hosoiri T."/>
            <person name="Kaku Y."/>
            <person name="Kodaira H."/>
            <person name="Kondo H."/>
            <person name="Sugawara M."/>
            <person name="Takahashi M."/>
            <person name="Kanda K."/>
            <person name="Yokoi T."/>
            <person name="Furuya T."/>
            <person name="Kikkawa E."/>
            <person name="Omura Y."/>
            <person name="Abe K."/>
            <person name="Kamihara K."/>
            <person name="Katsuta N."/>
            <person name="Sato K."/>
            <person name="Tanikawa M."/>
            <person name="Yamazaki M."/>
            <person name="Ninomiya K."/>
            <person name="Ishibashi T."/>
            <person name="Yamashita H."/>
            <person name="Murakawa K."/>
            <person name="Fujimori K."/>
            <person name="Tanai H."/>
            <person name="Kimata M."/>
            <person name="Watanabe M."/>
            <person name="Hiraoka S."/>
            <person name="Chiba Y."/>
            <person name="Ishida S."/>
            <person name="Ono Y."/>
            <person name="Takiguchi S."/>
            <person name="Watanabe S."/>
            <person name="Yosida M."/>
            <person name="Hotuta T."/>
            <person name="Kusano J."/>
            <person name="Kanehori K."/>
            <person name="Takahashi-Fujii A."/>
            <person name="Hara H."/>
            <person name="Tanase T.-O."/>
            <person name="Nomura Y."/>
            <person name="Togiya S."/>
            <person name="Komai F."/>
            <person name="Hara R."/>
            <person name="Takeuchi K."/>
            <person name="Arita M."/>
            <person name="Imose N."/>
            <person name="Musashino K."/>
            <person name="Yuuki H."/>
            <person name="Oshima A."/>
            <person name="Sasaki N."/>
            <person name="Aotsuka S."/>
            <person name="Yoshikawa Y."/>
            <person name="Matsunawa H."/>
            <person name="Ichihara T."/>
            <person name="Shiohata N."/>
            <person name="Sano S."/>
            <person name="Moriya S."/>
            <person name="Momiyama H."/>
            <person name="Satoh N."/>
            <person name="Takami S."/>
            <person name="Terashima Y."/>
            <person name="Suzuki O."/>
            <person name="Nakagawa S."/>
            <person name="Senoh A."/>
            <person name="Mizoguchi H."/>
            <person name="Goto Y."/>
            <person name="Shimizu F."/>
            <person name="Wakebe H."/>
            <person name="Hishigaki H."/>
            <person name="Watanabe T."/>
            <person name="Sugiyama A."/>
            <person name="Takemoto M."/>
            <person name="Kawakami B."/>
            <person name="Yamazaki M."/>
            <person name="Watanabe K."/>
            <person name="Kumagai A."/>
            <person name="Itakura S."/>
            <person name="Fukuzumi Y."/>
            <person name="Fujimori Y."/>
            <person name="Komiyama M."/>
            <person name="Tashiro H."/>
            <person name="Tanigami A."/>
            <person name="Fujiwara T."/>
            <person name="Ono T."/>
            <person name="Yamada K."/>
            <person name="Fujii Y."/>
            <person name="Ozaki K."/>
            <person name="Hirao M."/>
            <person name="Ohmori Y."/>
            <person name="Kawabata A."/>
            <person name="Hikiji T."/>
            <person name="Kobatake N."/>
            <person name="Inagaki H."/>
            <person name="Ikema Y."/>
            <person name="Okamoto S."/>
            <person name="Okitani R."/>
            <person name="Kawakami T."/>
            <person name="Noguchi S."/>
            <person name="Itoh T."/>
            <person name="Shigeta K."/>
            <person name="Senba T."/>
            <person name="Matsumura K."/>
            <person name="Nakajima Y."/>
            <person name="Mizuno T."/>
            <person name="Morinaga M."/>
            <person name="Sasaki M."/>
            <person name="Togashi T."/>
            <person name="Oyama M."/>
            <person name="Hata H."/>
            <person name="Watanabe M."/>
            <person name="Komatsu T."/>
            <person name="Mizushima-Sugano J."/>
            <person name="Satoh T."/>
            <person name="Shirai Y."/>
            <person name="Takahashi Y."/>
            <person name="Nakagawa K."/>
            <person name="Okumura K."/>
            <person name="Nagase T."/>
            <person name="Nomura N."/>
            <person name="Kikuchi H."/>
            <person name="Masuho Y."/>
            <person name="Yamashita R."/>
            <person name="Nakai K."/>
            <person name="Yada T."/>
            <person name="Nakamura Y."/>
            <person name="Ohara O."/>
            <person name="Isogai T."/>
            <person name="Sugano S."/>
        </authorList>
    </citation>
    <scope>NUCLEOTIDE SEQUENCE [LARGE SCALE MRNA]</scope>
    <source>
        <tissue>Placenta</tissue>
        <tissue>Uterus</tissue>
    </source>
</reference>
<reference key="3">
    <citation type="journal article" date="2007" name="BMC Genomics">
        <title>The full-ORF clone resource of the German cDNA consortium.</title>
        <authorList>
            <person name="Bechtel S."/>
            <person name="Rosenfelder H."/>
            <person name="Duda A."/>
            <person name="Schmidt C.P."/>
            <person name="Ernst U."/>
            <person name="Wellenreuther R."/>
            <person name="Mehrle A."/>
            <person name="Schuster C."/>
            <person name="Bahr A."/>
            <person name="Bloecker H."/>
            <person name="Heubner D."/>
            <person name="Hoerlein A."/>
            <person name="Michel G."/>
            <person name="Wedler H."/>
            <person name="Koehrer K."/>
            <person name="Ottenwaelder B."/>
            <person name="Poustka A."/>
            <person name="Wiemann S."/>
            <person name="Schupp I."/>
        </authorList>
    </citation>
    <scope>NUCLEOTIDE SEQUENCE [LARGE SCALE MRNA]</scope>
    <source>
        <tissue>Lymph node</tissue>
    </source>
</reference>
<reference key="4">
    <citation type="submission" date="2005-07" db="EMBL/GenBank/DDBJ databases">
        <authorList>
            <person name="Mural R.J."/>
            <person name="Istrail S."/>
            <person name="Sutton G.G."/>
            <person name="Florea L."/>
            <person name="Halpern A.L."/>
            <person name="Mobarry C.M."/>
            <person name="Lippert R."/>
            <person name="Walenz B."/>
            <person name="Shatkay H."/>
            <person name="Dew I."/>
            <person name="Miller J.R."/>
            <person name="Flanigan M.J."/>
            <person name="Edwards N.J."/>
            <person name="Bolanos R."/>
            <person name="Fasulo D."/>
            <person name="Halldorsson B.V."/>
            <person name="Hannenhalli S."/>
            <person name="Turner R."/>
            <person name="Yooseph S."/>
            <person name="Lu F."/>
            <person name="Nusskern D.R."/>
            <person name="Shue B.C."/>
            <person name="Zheng X.H."/>
            <person name="Zhong F."/>
            <person name="Delcher A.L."/>
            <person name="Huson D.H."/>
            <person name="Kravitz S.A."/>
            <person name="Mouchard L."/>
            <person name="Reinert K."/>
            <person name="Remington K.A."/>
            <person name="Clark A.G."/>
            <person name="Waterman M.S."/>
            <person name="Eichler E.E."/>
            <person name="Adams M.D."/>
            <person name="Hunkapiller M.W."/>
            <person name="Myers E.W."/>
            <person name="Venter J.C."/>
        </authorList>
    </citation>
    <scope>NUCLEOTIDE SEQUENCE [LARGE SCALE GENOMIC DNA]</scope>
</reference>
<reference key="5">
    <citation type="journal article" date="2004" name="Genome Res.">
        <title>The status, quality, and expansion of the NIH full-length cDNA project: the Mammalian Gene Collection (MGC).</title>
        <authorList>
            <consortium name="The MGC Project Team"/>
        </authorList>
    </citation>
    <scope>NUCLEOTIDE SEQUENCE [LARGE SCALE MRNA]</scope>
    <source>
        <tissue>Skin</tissue>
    </source>
</reference>
<reference key="6">
    <citation type="submission" date="2000-05" db="EMBL/GenBank/DDBJ databases">
        <title>A novel gene from human dendritic cells.</title>
        <authorList>
            <person name="Xu X."/>
            <person name="Yang Y."/>
            <person name="Gao G."/>
            <person name="Xiao H."/>
            <person name="Chen Z."/>
            <person name="Han Z."/>
        </authorList>
    </citation>
    <scope>NUCLEOTIDE SEQUENCE [LARGE SCALE MRNA] OF 112-281</scope>
    <source>
        <tissue>Dendritic cell</tissue>
    </source>
</reference>
<reference key="7">
    <citation type="journal article" date="2008" name="J. Proteome Res.">
        <title>Combining protein-based IMAC, peptide-based IMAC, and MudPIT for efficient phosphoproteomic analysis.</title>
        <authorList>
            <person name="Cantin G.T."/>
            <person name="Yi W."/>
            <person name="Lu B."/>
            <person name="Park S.K."/>
            <person name="Xu T."/>
            <person name="Lee J.-D."/>
            <person name="Yates J.R. III"/>
        </authorList>
    </citation>
    <scope>PHOSPHORYLATION [LARGE SCALE ANALYSIS] AT THR-188</scope>
    <scope>IDENTIFICATION BY MASS SPECTROMETRY [LARGE SCALE ANALYSIS]</scope>
    <source>
        <tissue>Cervix carcinoma</tissue>
    </source>
</reference>
<reference key="8">
    <citation type="journal article" date="2015" name="Mol. Cell. Proteomics">
        <title>System-wide analysis of SUMOylation dynamics in response to replication stress reveals novel small ubiquitin-like modified target proteins and acceptor lysines relevant for genome stability.</title>
        <authorList>
            <person name="Xiao Z."/>
            <person name="Chang J.G."/>
            <person name="Hendriks I.A."/>
            <person name="Sigurdsson J.O."/>
            <person name="Olsen J.V."/>
            <person name="Vertegaal A.C."/>
        </authorList>
    </citation>
    <scope>SUMOYLATION [LARGE SCALE ANALYSIS] AT LYS-142</scope>
    <scope>IDENTIFICATION BY MASS SPECTROMETRY [LARGE SCALE ANALYSIS]</scope>
</reference>
<reference key="9">
    <citation type="journal article" date="2017" name="Nat. Struct. Mol. Biol.">
        <title>Site-specific mapping of the human SUMO proteome reveals co-modification with phosphorylation.</title>
        <authorList>
            <person name="Hendriks I.A."/>
            <person name="Lyon D."/>
            <person name="Young C."/>
            <person name="Jensen L.J."/>
            <person name="Vertegaal A.C."/>
            <person name="Nielsen M.L."/>
        </authorList>
    </citation>
    <scope>SUMOYLATION [LARGE SCALE ANALYSIS] AT LYS-9; LYS-114; LYS-142; LYS-237; LYS-254 AND LYS-273</scope>
    <scope>IDENTIFICATION BY MASS SPECTROMETRY [LARGE SCALE ANALYSIS]</scope>
</reference>
<protein>
    <recommendedName>
        <fullName>Myb/SANT-like DNA-binding domain-containing protein 4</fullName>
    </recommendedName>
    <alternativeName>
        <fullName>Myb/SANT-like DNA-binding domain containing 4 with coiled-coils</fullName>
    </alternativeName>
</protein>
<proteinExistence type="evidence at protein level"/>
<sequence>MKQLKRKRKSNFSVQETQTLLKEITKRKEVIFSKQLNTTINVMKRMAWEEIAQCVNAVGEGEQRTGTEVKRRYLDWRALMKRKRMKANIKLVGSGFPLPSSDLDDSLTEEIDEKIGFRNDANFDWQNVADFRDAGGSLTEVKVEEEERDPQSPEFEIEEEEEMLSSVIPDSRRENELPDFPHIDEFFTLNSTPSRSAYDEPHLLVNIEKQKLELEKRRLDIEAERLQVEKERLQIEKERLRHLDMEHERLQLEKERLQIEREKLRLQIVNSEKPSLENELGQGEKSMLQPQDIETEKLKLERERLQLEKDRLQFLKFESEKLQIEKERLQVEKDRLRIQKEGHLQ</sequence>
<feature type="chain" id="PRO_0000311830" description="Myb/SANT-like DNA-binding domain-containing protein 4">
    <location>
        <begin position="1"/>
        <end position="345"/>
    </location>
</feature>
<feature type="domain" description="Myb-like">
    <location>
        <begin position="4"/>
        <end position="77"/>
    </location>
</feature>
<feature type="region of interest" description="Disordered" evidence="3">
    <location>
        <begin position="143"/>
        <end position="175"/>
    </location>
</feature>
<feature type="coiled-coil region" evidence="2">
    <location>
        <begin position="203"/>
        <end position="345"/>
    </location>
</feature>
<feature type="modified residue" description="Phosphoserine" evidence="1">
    <location>
        <position position="106"/>
    </location>
</feature>
<feature type="modified residue" description="Phosphothreonine" evidence="5">
    <location>
        <position position="188"/>
    </location>
</feature>
<feature type="cross-link" description="Glycyl lysine isopeptide (Lys-Gly) (interchain with G-Cter in SUMO2)" evidence="7">
    <location>
        <position position="9"/>
    </location>
</feature>
<feature type="cross-link" description="Glycyl lysine isopeptide (Lys-Gly) (interchain with G-Cter in SUMO2)" evidence="7">
    <location>
        <position position="114"/>
    </location>
</feature>
<feature type="cross-link" description="Glycyl lysine isopeptide (Lys-Gly) (interchain with G-Cter in SUMO2)" evidence="6 7">
    <location>
        <position position="142"/>
    </location>
</feature>
<feature type="cross-link" description="Glycyl lysine isopeptide (Lys-Gly) (interchain with G-Cter in SUMO2)" evidence="7">
    <location>
        <position position="237"/>
    </location>
</feature>
<feature type="cross-link" description="Glycyl lysine isopeptide (Lys-Gly) (interchain with G-Cter in SUMO2)" evidence="7">
    <location>
        <position position="254"/>
    </location>
</feature>
<feature type="cross-link" description="Glycyl lysine isopeptide (Lys-Gly) (interchain with G-Cter in SUMO2)" evidence="7">
    <location>
        <position position="273"/>
    </location>
</feature>
<organism>
    <name type="scientific">Homo sapiens</name>
    <name type="common">Human</name>
    <dbReference type="NCBI Taxonomy" id="9606"/>
    <lineage>
        <taxon>Eukaryota</taxon>
        <taxon>Metazoa</taxon>
        <taxon>Chordata</taxon>
        <taxon>Craniata</taxon>
        <taxon>Vertebrata</taxon>
        <taxon>Euteleostomi</taxon>
        <taxon>Mammalia</taxon>
        <taxon>Eutheria</taxon>
        <taxon>Euarchontoglires</taxon>
        <taxon>Primates</taxon>
        <taxon>Haplorrhini</taxon>
        <taxon>Catarrhini</taxon>
        <taxon>Hominidae</taxon>
        <taxon>Homo</taxon>
    </lineage>
</organism>
<name>MSD4_HUMAN</name>
<gene>
    <name type="primary">MSANTD4</name>
    <name type="synonym">KIAA1826</name>
    <name type="ORF">DC25</name>
</gene>
<accession>Q8NCY6</accession>
<accession>Q96JK1</accession>
<accession>Q96JZ3</accession>
<accession>Q9H2N4</accession>
<comment type="interaction">
    <interactant intactId="EBI-7850168">
        <id>Q8NCY6</id>
    </interactant>
    <interactant intactId="EBI-358049">
        <id>Q13895</id>
        <label>BYSL</label>
    </interactant>
    <organismsDiffer>false</organismsDiffer>
    <experiments>3</experiments>
</comment>
<comment type="interaction">
    <interactant intactId="EBI-7850168">
        <id>Q8NCY6</id>
    </interactant>
    <interactant intactId="EBI-77321">
        <id>Q9UER7</id>
        <label>DAXX</label>
    </interactant>
    <organismsDiffer>false</organismsDiffer>
    <experiments>3</experiments>
</comment>
<comment type="interaction">
    <interactant intactId="EBI-7850168">
        <id>Q8NCY6</id>
    </interactant>
    <interactant intactId="EBI-10220715">
        <id>P63211</id>
        <label>GNGT1</label>
    </interactant>
    <organismsDiffer>false</organismsDiffer>
    <experiments>3</experiments>
</comment>
<comment type="interaction">
    <interactant intactId="EBI-7850168">
        <id>Q8NCY6</id>
    </interactant>
    <interactant intactId="EBI-739832">
        <id>Q8TBB1</id>
        <label>LNX1</label>
    </interactant>
    <organismsDiffer>false</organismsDiffer>
    <experiments>3</experiments>
</comment>
<comment type="interaction">
    <interactant intactId="EBI-7850168">
        <id>Q8NCY6</id>
    </interactant>
    <interactant intactId="EBI-1045072">
        <id>Q96T60</id>
        <label>PNKP</label>
    </interactant>
    <organismsDiffer>false</organismsDiffer>
    <experiments>3</experiments>
</comment>
<comment type="interaction">
    <interactant intactId="EBI-7850168">
        <id>Q8NCY6</id>
    </interactant>
    <interactant intactId="EBI-359352">
        <id>P25786</id>
        <label>PSMA1</label>
    </interactant>
    <organismsDiffer>false</organismsDiffer>
    <experiments>3</experiments>
</comment>
<comment type="interaction">
    <interactant intactId="EBI-7850168">
        <id>Q8NCY6</id>
    </interactant>
    <interactant intactId="EBI-749285">
        <id>Q15311</id>
        <label>RALBP1</label>
    </interactant>
    <organismsDiffer>false</organismsDiffer>
    <experiments>6</experiments>
</comment>
<comment type="interaction">
    <interactant intactId="EBI-7850168">
        <id>Q8NCY6</id>
    </interactant>
    <interactant intactId="EBI-710310">
        <id>Q15560</id>
        <label>TCEA2</label>
    </interactant>
    <organismsDiffer>false</organismsDiffer>
    <experiments>3</experiments>
</comment>
<comment type="sequence caution" evidence="4">
    <conflict type="frameshift">
        <sequence resource="EMBL-CDS" id="AAG44625"/>
    </conflict>
</comment>
<comment type="sequence caution" evidence="4">
    <conflict type="erroneous initiation">
        <sequence resource="EMBL-CDS" id="BAB47455"/>
    </conflict>
</comment>
<comment type="sequence caution" evidence="4">
    <conflict type="erroneous initiation">
        <sequence resource="EMBL-CDS" id="BAB55371"/>
    </conflict>
</comment>
<dbReference type="EMBL" id="AB058729">
    <property type="protein sequence ID" value="BAB47455.1"/>
    <property type="status" value="ALT_INIT"/>
    <property type="molecule type" value="mRNA"/>
</dbReference>
<dbReference type="EMBL" id="AK293050">
    <property type="protein sequence ID" value="BAF85739.1"/>
    <property type="molecule type" value="mRNA"/>
</dbReference>
<dbReference type="EMBL" id="AL834523">
    <property type="protein sequence ID" value="CAD39179.1"/>
    <property type="molecule type" value="mRNA"/>
</dbReference>
<dbReference type="EMBL" id="CH471065">
    <property type="protein sequence ID" value="EAW67071.1"/>
    <property type="molecule type" value="Genomic_DNA"/>
</dbReference>
<dbReference type="EMBL" id="BC041118">
    <property type="protein sequence ID" value="AAH41118.1"/>
    <property type="molecule type" value="mRNA"/>
</dbReference>
<dbReference type="EMBL" id="AF253976">
    <property type="protein sequence ID" value="AAG44625.1"/>
    <property type="status" value="ALT_FRAME"/>
    <property type="molecule type" value="mRNA"/>
</dbReference>
<dbReference type="EMBL" id="AK027790">
    <property type="protein sequence ID" value="BAB55371.1"/>
    <property type="status" value="ALT_INIT"/>
    <property type="molecule type" value="mRNA"/>
</dbReference>
<dbReference type="CCDS" id="CCDS31663.1"/>
<dbReference type="RefSeq" id="NP_001305676.1">
    <property type="nucleotide sequence ID" value="NM_001318747.1"/>
</dbReference>
<dbReference type="RefSeq" id="NP_001305677.1">
    <property type="nucleotide sequence ID" value="NM_001318748.1"/>
</dbReference>
<dbReference type="RefSeq" id="NP_001305678.1">
    <property type="nucleotide sequence ID" value="NM_001318749.1"/>
</dbReference>
<dbReference type="RefSeq" id="NP_001305679.1">
    <property type="nucleotide sequence ID" value="NM_001318750.1"/>
</dbReference>
<dbReference type="RefSeq" id="NP_115800.1">
    <property type="nucleotide sequence ID" value="NM_032424.3"/>
</dbReference>
<dbReference type="RefSeq" id="XP_011541324.1">
    <property type="nucleotide sequence ID" value="XM_011543022.4"/>
</dbReference>
<dbReference type="RefSeq" id="XP_016873905.1">
    <property type="nucleotide sequence ID" value="XM_017018416.2"/>
</dbReference>
<dbReference type="RefSeq" id="XP_016873906.1">
    <property type="nucleotide sequence ID" value="XM_017018417.2"/>
</dbReference>
<dbReference type="RefSeq" id="XP_047283665.1">
    <property type="nucleotide sequence ID" value="XM_047427709.1"/>
</dbReference>
<dbReference type="RefSeq" id="XP_054226160.1">
    <property type="nucleotide sequence ID" value="XM_054370185.1"/>
</dbReference>
<dbReference type="RefSeq" id="XP_054226161.1">
    <property type="nucleotide sequence ID" value="XM_054370186.1"/>
</dbReference>
<dbReference type="RefSeq" id="XP_054226162.1">
    <property type="nucleotide sequence ID" value="XM_054370187.1"/>
</dbReference>
<dbReference type="RefSeq" id="XP_054226163.1">
    <property type="nucleotide sequence ID" value="XM_054370188.1"/>
</dbReference>
<dbReference type="SMR" id="Q8NCY6"/>
<dbReference type="BioGRID" id="124077">
    <property type="interactions" value="14"/>
</dbReference>
<dbReference type="FunCoup" id="Q8NCY6">
    <property type="interactions" value="1877"/>
</dbReference>
<dbReference type="IntAct" id="Q8NCY6">
    <property type="interactions" value="13"/>
</dbReference>
<dbReference type="MINT" id="Q8NCY6"/>
<dbReference type="STRING" id="9606.ENSP00000304713"/>
<dbReference type="iPTMnet" id="Q8NCY6"/>
<dbReference type="PhosphoSitePlus" id="Q8NCY6"/>
<dbReference type="BioMuta" id="MSANTD4"/>
<dbReference type="DMDM" id="74760164"/>
<dbReference type="jPOST" id="Q8NCY6"/>
<dbReference type="MassIVE" id="Q8NCY6"/>
<dbReference type="PaxDb" id="9606-ENSP00000304713"/>
<dbReference type="PeptideAtlas" id="Q8NCY6"/>
<dbReference type="ProteomicsDB" id="72967"/>
<dbReference type="Antibodypedia" id="54341">
    <property type="antibodies" value="24 antibodies from 9 providers"/>
</dbReference>
<dbReference type="DNASU" id="84437"/>
<dbReference type="Ensembl" id="ENST00000301919.9">
    <property type="protein sequence ID" value="ENSP00000304713.4"/>
    <property type="gene ID" value="ENSG00000170903.12"/>
</dbReference>
<dbReference type="GeneID" id="84437"/>
<dbReference type="KEGG" id="hsa:84437"/>
<dbReference type="MANE-Select" id="ENST00000301919.9">
    <property type="protein sequence ID" value="ENSP00000304713.4"/>
    <property type="RefSeq nucleotide sequence ID" value="NM_032424.3"/>
    <property type="RefSeq protein sequence ID" value="NP_115800.1"/>
</dbReference>
<dbReference type="UCSC" id="uc001piz.3">
    <property type="organism name" value="human"/>
</dbReference>
<dbReference type="AGR" id="HGNC:29383"/>
<dbReference type="CTD" id="84437"/>
<dbReference type="GeneCards" id="MSANTD4"/>
<dbReference type="HGNC" id="HGNC:29383">
    <property type="gene designation" value="MSANTD4"/>
</dbReference>
<dbReference type="HPA" id="ENSG00000170903">
    <property type="expression patterns" value="Low tissue specificity"/>
</dbReference>
<dbReference type="neXtProt" id="NX_Q8NCY6"/>
<dbReference type="OpenTargets" id="ENSG00000170903"/>
<dbReference type="PharmGKB" id="PA143485519"/>
<dbReference type="VEuPathDB" id="HostDB:ENSG00000170903"/>
<dbReference type="eggNOG" id="ENOG502RGM9">
    <property type="taxonomic scope" value="Eukaryota"/>
</dbReference>
<dbReference type="GeneTree" id="ENSGT00440000039469"/>
<dbReference type="HOGENOM" id="CLU_066150_0_0_1"/>
<dbReference type="InParanoid" id="Q8NCY6"/>
<dbReference type="OMA" id="WLKANIK"/>
<dbReference type="OrthoDB" id="3066195at2759"/>
<dbReference type="PAN-GO" id="Q8NCY6">
    <property type="GO annotations" value="0 GO annotations based on evolutionary models"/>
</dbReference>
<dbReference type="PhylomeDB" id="Q8NCY6"/>
<dbReference type="TreeFam" id="TF330965"/>
<dbReference type="PathwayCommons" id="Q8NCY6"/>
<dbReference type="SignaLink" id="Q8NCY6"/>
<dbReference type="BioGRID-ORCS" id="84437">
    <property type="hits" value="14 hits in 1159 CRISPR screens"/>
</dbReference>
<dbReference type="ChiTaRS" id="MSANTD4">
    <property type="organism name" value="human"/>
</dbReference>
<dbReference type="GeneWiki" id="KIAA1826"/>
<dbReference type="GenomeRNAi" id="84437"/>
<dbReference type="Pharos" id="Q8NCY6">
    <property type="development level" value="Tdark"/>
</dbReference>
<dbReference type="PRO" id="PR:Q8NCY6"/>
<dbReference type="Proteomes" id="UP000005640">
    <property type="component" value="Chromosome 11"/>
</dbReference>
<dbReference type="RNAct" id="Q8NCY6">
    <property type="molecule type" value="protein"/>
</dbReference>
<dbReference type="Bgee" id="ENSG00000170903">
    <property type="expression patterns" value="Expressed in tendon of biceps brachii and 186 other cell types or tissues"/>
</dbReference>
<dbReference type="ExpressionAtlas" id="Q8NCY6">
    <property type="expression patterns" value="baseline and differential"/>
</dbReference>
<dbReference type="GO" id="GO:0005634">
    <property type="term" value="C:nucleus"/>
    <property type="evidence" value="ECO:0000314"/>
    <property type="project" value="LIFEdb"/>
</dbReference>
<dbReference type="InterPro" id="IPR026162">
    <property type="entry name" value="MSANTD4"/>
</dbReference>
<dbReference type="InterPro" id="IPR028002">
    <property type="entry name" value="Myb_DNA-bind_5"/>
</dbReference>
<dbReference type="PANTHER" id="PTHR21732">
    <property type="entry name" value="MYB/SANT-LIKE DNA-BINDING DOMAIN-CONTAINING PROTEIN 4"/>
    <property type="match status" value="1"/>
</dbReference>
<dbReference type="PANTHER" id="PTHR21732:SF0">
    <property type="entry name" value="MYB_SANT-LIKE DNA-BINDING DOMAIN-CONTAINING PROTEIN 4"/>
    <property type="match status" value="1"/>
</dbReference>
<dbReference type="Pfam" id="PF13873">
    <property type="entry name" value="Myb_DNA-bind_5"/>
    <property type="match status" value="1"/>
</dbReference>